<organism>
    <name type="scientific">Mycobacterium tuberculosis (strain CDC 1551 / Oshkosh)</name>
    <dbReference type="NCBI Taxonomy" id="83331"/>
    <lineage>
        <taxon>Bacteria</taxon>
        <taxon>Bacillati</taxon>
        <taxon>Actinomycetota</taxon>
        <taxon>Actinomycetes</taxon>
        <taxon>Mycobacteriales</taxon>
        <taxon>Mycobacteriaceae</taxon>
        <taxon>Mycobacterium</taxon>
        <taxon>Mycobacterium tuberculosis complex</taxon>
    </lineage>
</organism>
<gene>
    <name type="primary">egtD</name>
    <name type="ordered locus">MT3804</name>
</gene>
<proteinExistence type="evidence at transcript level"/>
<name>EGTD_MYCTO</name>
<keyword id="KW-0489">Methyltransferase</keyword>
<keyword id="KW-1185">Reference proteome</keyword>
<keyword id="KW-0949">S-adenosyl-L-methionine</keyword>
<keyword id="KW-0808">Transferase</keyword>
<protein>
    <recommendedName>
        <fullName>Histidine N-alpha-methyltransferase</fullName>
        <ecNumber evidence="1">2.1.1.44</ecNumber>
    </recommendedName>
    <alternativeName>
        <fullName>Histidine trimethyltransferase</fullName>
    </alternativeName>
</protein>
<accession>P9WN46</accession>
<accession>L0TG93</accession>
<accession>O69669</accession>
<accession>Q7D514</accession>
<feature type="chain" id="PRO_0000427190" description="Histidine N-alpha-methyltransferase">
    <location>
        <begin position="1"/>
        <end position="321"/>
    </location>
</feature>
<feature type="binding site" evidence="1">
    <location>
        <position position="56"/>
    </location>
    <ligand>
        <name>L-histidine</name>
        <dbReference type="ChEBI" id="CHEBI:57595"/>
    </ligand>
</feature>
<feature type="binding site" evidence="1">
    <location>
        <position position="86"/>
    </location>
    <ligand>
        <name>S-adenosyl-L-methionine</name>
        <dbReference type="ChEBI" id="CHEBI:59789"/>
    </ligand>
</feature>
<feature type="binding site" evidence="1">
    <location>
        <position position="92"/>
    </location>
    <ligand>
        <name>S-adenosyl-L-methionine</name>
        <dbReference type="ChEBI" id="CHEBI:59789"/>
    </ligand>
</feature>
<feature type="binding site" evidence="1">
    <location>
        <position position="113"/>
    </location>
    <ligand>
        <name>S-adenosyl-L-methionine</name>
        <dbReference type="ChEBI" id="CHEBI:59789"/>
    </ligand>
</feature>
<feature type="binding site" evidence="1">
    <location>
        <begin position="141"/>
        <end position="142"/>
    </location>
    <ligand>
        <name>S-adenosyl-L-methionine</name>
        <dbReference type="ChEBI" id="CHEBI:59789"/>
    </ligand>
</feature>
<feature type="binding site" evidence="1">
    <location>
        <position position="166"/>
    </location>
    <ligand>
        <name>L-histidine</name>
        <dbReference type="ChEBI" id="CHEBI:57595"/>
    </ligand>
</feature>
<feature type="binding site" evidence="1">
    <location>
        <position position="206"/>
    </location>
    <ligand>
        <name>L-histidine</name>
        <dbReference type="ChEBI" id="CHEBI:57595"/>
    </ligand>
</feature>
<feature type="binding site" evidence="1">
    <location>
        <begin position="282"/>
        <end position="284"/>
    </location>
    <ligand>
        <name>L-histidine</name>
        <dbReference type="ChEBI" id="CHEBI:57595"/>
    </ligand>
</feature>
<evidence type="ECO:0000250" key="1">
    <source>
        <dbReference type="UniProtKB" id="A0R5M8"/>
    </source>
</evidence>
<evidence type="ECO:0000269" key="2">
    <source>
    </source>
</evidence>
<evidence type="ECO:0000305" key="3"/>
<evidence type="ECO:0000305" key="4">
    <source>
    </source>
</evidence>
<reference key="1">
    <citation type="journal article" date="2002" name="J. Bacteriol.">
        <title>Whole-genome comparison of Mycobacterium tuberculosis clinical and laboratory strains.</title>
        <authorList>
            <person name="Fleischmann R.D."/>
            <person name="Alland D."/>
            <person name="Eisen J.A."/>
            <person name="Carpenter L."/>
            <person name="White O."/>
            <person name="Peterson J.D."/>
            <person name="DeBoy R.T."/>
            <person name="Dodson R.J."/>
            <person name="Gwinn M.L."/>
            <person name="Haft D.H."/>
            <person name="Hickey E.K."/>
            <person name="Kolonay J.F."/>
            <person name="Nelson W.C."/>
            <person name="Umayam L.A."/>
            <person name="Ermolaeva M.D."/>
            <person name="Salzberg S.L."/>
            <person name="Delcher A."/>
            <person name="Utterback T.R."/>
            <person name="Weidman J.F."/>
            <person name="Khouri H.M."/>
            <person name="Gill J."/>
            <person name="Mikula A."/>
            <person name="Bishai W."/>
            <person name="Jacobs W.R. Jr."/>
            <person name="Venter J.C."/>
            <person name="Fraser C.M."/>
        </authorList>
    </citation>
    <scope>NUCLEOTIDE SEQUENCE [LARGE SCALE GENOMIC DNA]</scope>
    <source>
        <strain>CDC 1551 / Oshkosh</strain>
    </source>
</reference>
<reference key="2">
    <citation type="journal article" date="2016" name="Cell Rep.">
        <title>Ergothioneine maintains redox and bioenergetic homeostasis essential for drug susceptibility and virulence of Mycobacterium tuberculosis.</title>
        <authorList>
            <person name="Saini V."/>
            <person name="Cumming B.M."/>
            <person name="Guidry L."/>
            <person name="Lamprecht D.A."/>
            <person name="Adamson J.H."/>
            <person name="Reddy V.P."/>
            <person name="Chinta K.C."/>
            <person name="Mazorodze J.H."/>
            <person name="Glasgow J.N."/>
            <person name="Richard-Greenblatt M."/>
            <person name="Gomez-Velasco A."/>
            <person name="Bach H."/>
            <person name="Av-Gay Y."/>
            <person name="Eoh H."/>
            <person name="Rhee K."/>
            <person name="Steyn A.J."/>
        </authorList>
    </citation>
    <scope>FUNCTION</scope>
    <scope>PATHWAY</scope>
    <scope>INDUCTION</scope>
    <scope>OPERON STRUCTURE</scope>
    <scope>DISRUPTION PHENOTYPE</scope>
    <source>
        <strain>CDC 1551 / Oshkosh</strain>
    </source>
</reference>
<comment type="function">
    <text evidence="1 4">Catalyzes the SAM-dependent triple methylation of the alpha-amino group of histidine to form hercynine, a step in the biosynthesis pathway of ergothioneine (ERG). ERG is one of the major redox buffers which protects bacteria against redox stressors and antibiotics; loss of ERG or mycothiol (MSH, the other major redox buffer in this bacteria) leads to respiratory alterations and bioenergetic deficiencies that negatively impact virulence (PubMed:26774486).</text>
</comment>
<comment type="catalytic activity">
    <reaction evidence="1">
        <text>L-histidine + 3 S-adenosyl-L-methionine = hercynine + 3 S-adenosyl-L-homocysteine + 3 H(+)</text>
        <dbReference type="Rhea" id="RHEA:38471"/>
        <dbReference type="ChEBI" id="CHEBI:15378"/>
        <dbReference type="ChEBI" id="CHEBI:15781"/>
        <dbReference type="ChEBI" id="CHEBI:57595"/>
        <dbReference type="ChEBI" id="CHEBI:57856"/>
        <dbReference type="ChEBI" id="CHEBI:59789"/>
        <dbReference type="EC" id="2.1.1.44"/>
    </reaction>
</comment>
<comment type="pathway">
    <text evidence="1 4">Amino-acid biosynthesis; ergothioneine biosynthesis.</text>
</comment>
<comment type="subunit">
    <text evidence="1">Monomer.</text>
</comment>
<comment type="induction">
    <text evidence="2">Expressed in log phase, part of the egtA-egtB-egtC-egtD operon, which does not include egtE (PubMed:26774486).</text>
</comment>
<comment type="disruption phenotype">
    <text evidence="2">Loss of production of ergothioneine (ERG), no alteration in ratio of oxidized versus reduced mycothiol (MSH), decreased resistance to compounds that cause oxidative stress, decreased resistance to the antibitoics rifampicin, isoniazid, bedaquiline and clofazimine (PubMed:26774486). Absence leads to alteration of transcript levels for 74 genes which probably compensate for loss of redox control (PubMed:26774486). Decreased bacterial survival in mouse macrophage cell line, 4-fold decreased bacterial burden in infected mice lungs (strain BALB/c), no alteration in mouse lung ERG levels (PubMed:26774486).</text>
</comment>
<comment type="similarity">
    <text evidence="3">Belongs to the methyltransferase superfamily. EgtD family.</text>
</comment>
<sequence length="321" mass="35404">MRVSVANHLGEDAGHLALRRDVYSGLQKTPKSLPPKWFYDTVGSELFDQITRLPEYYPTRAEAEILRARSAEVASACRADTLVELGSGTSEKTRMLLDALRHRGSLRRFVPFDVDASVLSATATAIQREYSGVEINAVCGDFEEHLTEIPRGGRRLFVFLGSTIGNLTPGPRAQFLTALAGVMRPGDSLLLGTDLVKDAARLVRAYDDPGGVTAQFNRNVLAVINRELEADFDVDAFQHVARWNSAEERIEMWLRADGRQRVRVGALDLTVDFDAGEEMLTEVSCKFRPQAVGAELAAAGLHRIRWWTDEAGDFGLSLAAK</sequence>
<dbReference type="EC" id="2.1.1.44" evidence="1"/>
<dbReference type="EMBL" id="AE000516">
    <property type="protein sequence ID" value="AAK48171.1"/>
    <property type="molecule type" value="Genomic_DNA"/>
</dbReference>
<dbReference type="PIR" id="F70793">
    <property type="entry name" value="F70793"/>
</dbReference>
<dbReference type="RefSeq" id="WP_003419799.1">
    <property type="nucleotide sequence ID" value="NZ_KK341227.1"/>
</dbReference>
<dbReference type="SMR" id="P9WN46"/>
<dbReference type="KEGG" id="mtc:MT3804"/>
<dbReference type="PATRIC" id="fig|83331.31.peg.4096"/>
<dbReference type="HOGENOM" id="CLU_049766_1_0_11"/>
<dbReference type="UniPathway" id="UPA01014"/>
<dbReference type="Proteomes" id="UP000001020">
    <property type="component" value="Chromosome"/>
</dbReference>
<dbReference type="GO" id="GO:0052706">
    <property type="term" value="F:L-histidine N(alpha)-methyltransferase activity"/>
    <property type="evidence" value="ECO:0007669"/>
    <property type="project" value="UniProtKB-UniRule"/>
</dbReference>
<dbReference type="GO" id="GO:0008276">
    <property type="term" value="F:protein methyltransferase activity"/>
    <property type="evidence" value="ECO:0000250"/>
    <property type="project" value="UniProtKB"/>
</dbReference>
<dbReference type="GO" id="GO:0052704">
    <property type="term" value="P:ergothioneine biosynthesis from histidine via gamma-glutamyl-hercynylcysteine sulfoxide"/>
    <property type="evidence" value="ECO:0000250"/>
    <property type="project" value="UniProtKB"/>
</dbReference>
<dbReference type="GO" id="GO:0032259">
    <property type="term" value="P:methylation"/>
    <property type="evidence" value="ECO:0007669"/>
    <property type="project" value="UniProtKB-KW"/>
</dbReference>
<dbReference type="FunFam" id="3.40.50.150:FF:000362">
    <property type="entry name" value="Histidine N-alpha-methyltransferase"/>
    <property type="match status" value="1"/>
</dbReference>
<dbReference type="Gene3D" id="3.40.50.150">
    <property type="entry name" value="Vaccinia Virus protein VP39"/>
    <property type="match status" value="2"/>
</dbReference>
<dbReference type="HAMAP" id="MF_02037">
    <property type="entry name" value="EgtD"/>
    <property type="match status" value="1"/>
</dbReference>
<dbReference type="InterPro" id="IPR035094">
    <property type="entry name" value="EgtD"/>
</dbReference>
<dbReference type="InterPro" id="IPR032888">
    <property type="entry name" value="EgtD_Actinobacteria"/>
</dbReference>
<dbReference type="InterPro" id="IPR051128">
    <property type="entry name" value="EgtD_Methyltrsf_superfamily"/>
</dbReference>
<dbReference type="InterPro" id="IPR019257">
    <property type="entry name" value="MeTrfase_dom"/>
</dbReference>
<dbReference type="InterPro" id="IPR017804">
    <property type="entry name" value="MeTrfase_EgtD-like"/>
</dbReference>
<dbReference type="InterPro" id="IPR029063">
    <property type="entry name" value="SAM-dependent_MTases_sf"/>
</dbReference>
<dbReference type="NCBIfam" id="TIGR03438">
    <property type="entry name" value="egtD_ergothio"/>
    <property type="match status" value="1"/>
</dbReference>
<dbReference type="PANTHER" id="PTHR43397">
    <property type="entry name" value="ERGOTHIONEINE BIOSYNTHESIS PROTEIN 1"/>
    <property type="match status" value="1"/>
</dbReference>
<dbReference type="PANTHER" id="PTHR43397:SF1">
    <property type="entry name" value="ERGOTHIONEINE BIOSYNTHESIS PROTEIN 1"/>
    <property type="match status" value="1"/>
</dbReference>
<dbReference type="Pfam" id="PF10017">
    <property type="entry name" value="Methyltransf_33"/>
    <property type="match status" value="1"/>
</dbReference>
<dbReference type="PIRSF" id="PIRSF018005">
    <property type="entry name" value="UCP018005"/>
    <property type="match status" value="1"/>
</dbReference>
<dbReference type="SUPFAM" id="SSF53335">
    <property type="entry name" value="S-adenosyl-L-methionine-dependent methyltransferases"/>
    <property type="match status" value="1"/>
</dbReference>